<feature type="chain" id="PRO_0000327096" description="Protoheme IX farnesyltransferase">
    <location>
        <begin position="1"/>
        <end position="312"/>
    </location>
</feature>
<feature type="transmembrane region" description="Helical" evidence="1">
    <location>
        <begin position="34"/>
        <end position="54"/>
    </location>
</feature>
<feature type="transmembrane region" description="Helical" evidence="1">
    <location>
        <begin position="56"/>
        <end position="76"/>
    </location>
</feature>
<feature type="transmembrane region" description="Helical" evidence="1">
    <location>
        <begin position="119"/>
        <end position="139"/>
    </location>
</feature>
<feature type="transmembrane region" description="Helical" evidence="1">
    <location>
        <begin position="152"/>
        <end position="172"/>
    </location>
</feature>
<feature type="transmembrane region" description="Helical" evidence="1">
    <location>
        <begin position="179"/>
        <end position="199"/>
    </location>
</feature>
<feature type="transmembrane region" description="Helical" evidence="1">
    <location>
        <begin position="225"/>
        <end position="245"/>
    </location>
</feature>
<feature type="transmembrane region" description="Helical" evidence="1">
    <location>
        <begin position="247"/>
        <end position="267"/>
    </location>
</feature>
<feature type="transmembrane region" description="Helical" evidence="1">
    <location>
        <begin position="283"/>
        <end position="303"/>
    </location>
</feature>
<organism>
    <name type="scientific">Nitrobacter hamburgensis (strain DSM 10229 / NCIMB 13809 / X14)</name>
    <dbReference type="NCBI Taxonomy" id="323097"/>
    <lineage>
        <taxon>Bacteria</taxon>
        <taxon>Pseudomonadati</taxon>
        <taxon>Pseudomonadota</taxon>
        <taxon>Alphaproteobacteria</taxon>
        <taxon>Hyphomicrobiales</taxon>
        <taxon>Nitrobacteraceae</taxon>
        <taxon>Nitrobacter</taxon>
    </lineage>
</organism>
<name>COXX_NITHX</name>
<accession>Q1QHV7</accession>
<gene>
    <name evidence="1" type="primary">ctaB1</name>
    <name type="ordered locus">Nham_0257</name>
    <name type="ordered locus">Nham_3461</name>
</gene>
<proteinExistence type="inferred from homology"/>
<sequence>MPVVDQNAIELPPRISEASVADYFALLKPRVMSLVIFTALVGLMIAPGHVHPVLGFTAILCIAVGAGASGALNMALEGDIDVLMSRTANRPIPRGRITRGEAMGFGLTLSFFSVMTLGALVNWYAGGLLAFTIFFYVVIYTMGLKRRTAQNIVIGGAAGALPPVVAWAAATGSLSVEPLLLFLIIFFWTPPHFWALALFRSDDYARAGVPMLPVVAGPDATRLQILLYTIVLVAIAAAPWPLGYFDWVYGVTSLVLGAGMLVLAINVYRHRTGSTALRATRRLFAFSILYLFALFAVLLLDVLAKAVAPLIW</sequence>
<comment type="function">
    <text evidence="1">Converts heme B (protoheme IX) to heme O by substitution of the vinyl group on carbon 2 of heme B porphyrin ring with a hydroxyethyl farnesyl side group.</text>
</comment>
<comment type="catalytic activity">
    <reaction evidence="1">
        <text>heme b + (2E,6E)-farnesyl diphosphate + H2O = Fe(II)-heme o + diphosphate</text>
        <dbReference type="Rhea" id="RHEA:28070"/>
        <dbReference type="ChEBI" id="CHEBI:15377"/>
        <dbReference type="ChEBI" id="CHEBI:33019"/>
        <dbReference type="ChEBI" id="CHEBI:60344"/>
        <dbReference type="ChEBI" id="CHEBI:60530"/>
        <dbReference type="ChEBI" id="CHEBI:175763"/>
        <dbReference type="EC" id="2.5.1.141"/>
    </reaction>
</comment>
<comment type="pathway">
    <text evidence="1">Porphyrin-containing compound metabolism; heme O biosynthesis; heme O from protoheme: step 1/1.</text>
</comment>
<comment type="subcellular location">
    <subcellularLocation>
        <location evidence="1">Cell inner membrane</location>
        <topology evidence="1">Multi-pass membrane protein</topology>
    </subcellularLocation>
</comment>
<comment type="miscellaneous">
    <text evidence="1">Carbon 2 of the heme B porphyrin ring is defined according to the Fischer nomenclature.</text>
</comment>
<comment type="similarity">
    <text evidence="1">Belongs to the UbiA prenyltransferase family. Protoheme IX farnesyltransferase subfamily.</text>
</comment>
<comment type="sequence caution" evidence="2">
    <conflict type="erroneous initiation">
        <sequence resource="EMBL-CDS" id="ABE61157"/>
    </conflict>
</comment>
<comment type="sequence caution" evidence="2">
    <conflict type="erroneous initiation">
        <sequence resource="EMBL-CDS" id="ABE64190"/>
    </conflict>
</comment>
<keyword id="KW-0997">Cell inner membrane</keyword>
<keyword id="KW-1003">Cell membrane</keyword>
<keyword id="KW-0350">Heme biosynthesis</keyword>
<keyword id="KW-0472">Membrane</keyword>
<keyword id="KW-1185">Reference proteome</keyword>
<keyword id="KW-0808">Transferase</keyword>
<keyword id="KW-0812">Transmembrane</keyword>
<keyword id="KW-1133">Transmembrane helix</keyword>
<protein>
    <recommendedName>
        <fullName evidence="1">Protoheme IX farnesyltransferase</fullName>
        <ecNumber evidence="1">2.5.1.141</ecNumber>
    </recommendedName>
    <alternativeName>
        <fullName evidence="1">Heme B farnesyltransferase</fullName>
    </alternativeName>
    <alternativeName>
        <fullName evidence="1">Heme O synthase</fullName>
    </alternativeName>
</protein>
<evidence type="ECO:0000255" key="1">
    <source>
        <dbReference type="HAMAP-Rule" id="MF_00154"/>
    </source>
</evidence>
<evidence type="ECO:0000305" key="2"/>
<dbReference type="EC" id="2.5.1.141" evidence="1"/>
<dbReference type="EMBL" id="CP000319">
    <property type="protein sequence ID" value="ABE61157.1"/>
    <property type="status" value="ALT_INIT"/>
    <property type="molecule type" value="Genomic_DNA"/>
</dbReference>
<dbReference type="EMBL" id="CP000319">
    <property type="protein sequence ID" value="ABE64190.1"/>
    <property type="status" value="ALT_INIT"/>
    <property type="molecule type" value="Genomic_DNA"/>
</dbReference>
<dbReference type="RefSeq" id="WP_041358582.1">
    <property type="nucleotide sequence ID" value="NC_007964.1"/>
</dbReference>
<dbReference type="SMR" id="Q1QHV7"/>
<dbReference type="STRING" id="323097.Nham_0257"/>
<dbReference type="KEGG" id="nha:Nham_0257"/>
<dbReference type="KEGG" id="nha:Nham_3461"/>
<dbReference type="eggNOG" id="COG0109">
    <property type="taxonomic scope" value="Bacteria"/>
</dbReference>
<dbReference type="HOGENOM" id="CLU_029631_0_2_5"/>
<dbReference type="OrthoDB" id="9814417at2"/>
<dbReference type="UniPathway" id="UPA00834">
    <property type="reaction ID" value="UER00712"/>
</dbReference>
<dbReference type="Proteomes" id="UP000001953">
    <property type="component" value="Chromosome"/>
</dbReference>
<dbReference type="GO" id="GO:0005886">
    <property type="term" value="C:plasma membrane"/>
    <property type="evidence" value="ECO:0007669"/>
    <property type="project" value="UniProtKB-SubCell"/>
</dbReference>
<dbReference type="GO" id="GO:0008495">
    <property type="term" value="F:protoheme IX farnesyltransferase activity"/>
    <property type="evidence" value="ECO:0007669"/>
    <property type="project" value="UniProtKB-UniRule"/>
</dbReference>
<dbReference type="GO" id="GO:0048034">
    <property type="term" value="P:heme O biosynthetic process"/>
    <property type="evidence" value="ECO:0007669"/>
    <property type="project" value="UniProtKB-UniRule"/>
</dbReference>
<dbReference type="CDD" id="cd13957">
    <property type="entry name" value="PT_UbiA_Cox10"/>
    <property type="match status" value="1"/>
</dbReference>
<dbReference type="Gene3D" id="1.10.357.140">
    <property type="entry name" value="UbiA prenyltransferase"/>
    <property type="match status" value="1"/>
</dbReference>
<dbReference type="HAMAP" id="MF_00154">
    <property type="entry name" value="CyoE_CtaB"/>
    <property type="match status" value="1"/>
</dbReference>
<dbReference type="InterPro" id="IPR006369">
    <property type="entry name" value="Protohaem_IX_farnesylTrfase"/>
</dbReference>
<dbReference type="InterPro" id="IPR000537">
    <property type="entry name" value="UbiA_prenyltransferase"/>
</dbReference>
<dbReference type="InterPro" id="IPR030470">
    <property type="entry name" value="UbiA_prenylTrfase_CS"/>
</dbReference>
<dbReference type="InterPro" id="IPR044878">
    <property type="entry name" value="UbiA_sf"/>
</dbReference>
<dbReference type="NCBIfam" id="TIGR01473">
    <property type="entry name" value="cyoE_ctaB"/>
    <property type="match status" value="1"/>
</dbReference>
<dbReference type="NCBIfam" id="NF003349">
    <property type="entry name" value="PRK04375.1-2"/>
    <property type="match status" value="1"/>
</dbReference>
<dbReference type="PANTHER" id="PTHR43448:SF7">
    <property type="entry name" value="4-HYDROXYBENZOATE SOLANESYLTRANSFERASE"/>
    <property type="match status" value="1"/>
</dbReference>
<dbReference type="PANTHER" id="PTHR43448">
    <property type="entry name" value="PROTOHEME IX FARNESYLTRANSFERASE, MITOCHONDRIAL"/>
    <property type="match status" value="1"/>
</dbReference>
<dbReference type="Pfam" id="PF01040">
    <property type="entry name" value="UbiA"/>
    <property type="match status" value="1"/>
</dbReference>
<dbReference type="PROSITE" id="PS00943">
    <property type="entry name" value="UBIA"/>
    <property type="match status" value="1"/>
</dbReference>
<reference key="1">
    <citation type="submission" date="2006-03" db="EMBL/GenBank/DDBJ databases">
        <title>Complete sequence of chromosome of Nitrobacter hamburgensis X14.</title>
        <authorList>
            <consortium name="US DOE Joint Genome Institute"/>
            <person name="Copeland A."/>
            <person name="Lucas S."/>
            <person name="Lapidus A."/>
            <person name="Barry K."/>
            <person name="Detter J.C."/>
            <person name="Glavina del Rio T."/>
            <person name="Hammon N."/>
            <person name="Israni S."/>
            <person name="Dalin E."/>
            <person name="Tice H."/>
            <person name="Pitluck S."/>
            <person name="Chain P."/>
            <person name="Malfatti S."/>
            <person name="Shin M."/>
            <person name="Vergez L."/>
            <person name="Schmutz J."/>
            <person name="Larimer F."/>
            <person name="Land M."/>
            <person name="Hauser L."/>
            <person name="Kyrpides N."/>
            <person name="Ivanova N."/>
            <person name="Ward B."/>
            <person name="Arp D."/>
            <person name="Klotz M."/>
            <person name="Stein L."/>
            <person name="O'Mullan G."/>
            <person name="Starkenburg S."/>
            <person name="Sayavedra L."/>
            <person name="Poret-Peterson A.T."/>
            <person name="Gentry M.E."/>
            <person name="Bruce D."/>
            <person name="Richardson P."/>
        </authorList>
    </citation>
    <scope>NUCLEOTIDE SEQUENCE [LARGE SCALE GENOMIC DNA]</scope>
    <source>
        <strain>DSM 10229 / NCIMB 13809 / X14</strain>
    </source>
</reference>